<comment type="function">
    <text evidence="1">May play a role in neuronal and neurobehavioral development.</text>
</comment>
<comment type="similarity">
    <text evidence="3">Belongs to the UPF0524 family.</text>
</comment>
<reference key="1">
    <citation type="journal article" date="2006" name="Nature">
        <title>The DNA sequence, annotation and analysis of human chromosome 3.</title>
        <authorList>
            <person name="Muzny D.M."/>
            <person name="Scherer S.E."/>
            <person name="Kaul R."/>
            <person name="Wang J."/>
            <person name="Yu J."/>
            <person name="Sudbrak R."/>
            <person name="Buhay C.J."/>
            <person name="Chen R."/>
            <person name="Cree A."/>
            <person name="Ding Y."/>
            <person name="Dugan-Rocha S."/>
            <person name="Gill R."/>
            <person name="Gunaratne P."/>
            <person name="Harris R.A."/>
            <person name="Hawes A.C."/>
            <person name="Hernandez J."/>
            <person name="Hodgson A.V."/>
            <person name="Hume J."/>
            <person name="Jackson A."/>
            <person name="Khan Z.M."/>
            <person name="Kovar-Smith C."/>
            <person name="Lewis L.R."/>
            <person name="Lozado R.J."/>
            <person name="Metzker M.L."/>
            <person name="Milosavljevic A."/>
            <person name="Miner G.R."/>
            <person name="Morgan M.B."/>
            <person name="Nazareth L.V."/>
            <person name="Scott G."/>
            <person name="Sodergren E."/>
            <person name="Song X.-Z."/>
            <person name="Steffen D."/>
            <person name="Wei S."/>
            <person name="Wheeler D.A."/>
            <person name="Wright M.W."/>
            <person name="Worley K.C."/>
            <person name="Yuan Y."/>
            <person name="Zhang Z."/>
            <person name="Adams C.Q."/>
            <person name="Ansari-Lari M.A."/>
            <person name="Ayele M."/>
            <person name="Brown M.J."/>
            <person name="Chen G."/>
            <person name="Chen Z."/>
            <person name="Clendenning J."/>
            <person name="Clerc-Blankenburg K.P."/>
            <person name="Chen R."/>
            <person name="Chen Z."/>
            <person name="Davis C."/>
            <person name="Delgado O."/>
            <person name="Dinh H.H."/>
            <person name="Dong W."/>
            <person name="Draper H."/>
            <person name="Ernst S."/>
            <person name="Fu G."/>
            <person name="Gonzalez-Garay M.L."/>
            <person name="Garcia D.K."/>
            <person name="Gillett W."/>
            <person name="Gu J."/>
            <person name="Hao B."/>
            <person name="Haugen E."/>
            <person name="Havlak P."/>
            <person name="He X."/>
            <person name="Hennig S."/>
            <person name="Hu S."/>
            <person name="Huang W."/>
            <person name="Jackson L.R."/>
            <person name="Jacob L.S."/>
            <person name="Kelly S.H."/>
            <person name="Kube M."/>
            <person name="Levy R."/>
            <person name="Li Z."/>
            <person name="Liu B."/>
            <person name="Liu J."/>
            <person name="Liu W."/>
            <person name="Lu J."/>
            <person name="Maheshwari M."/>
            <person name="Nguyen B.-V."/>
            <person name="Okwuonu G.O."/>
            <person name="Palmeiri A."/>
            <person name="Pasternak S."/>
            <person name="Perez L.M."/>
            <person name="Phelps K.A."/>
            <person name="Plopper F.J."/>
            <person name="Qiang B."/>
            <person name="Raymond C."/>
            <person name="Rodriguez R."/>
            <person name="Saenphimmachak C."/>
            <person name="Santibanez J."/>
            <person name="Shen H."/>
            <person name="Shen Y."/>
            <person name="Subramanian S."/>
            <person name="Tabor P.E."/>
            <person name="Verduzco D."/>
            <person name="Waldron L."/>
            <person name="Wang J."/>
            <person name="Wang J."/>
            <person name="Wang Q."/>
            <person name="Williams G.A."/>
            <person name="Wong G.K.-S."/>
            <person name="Yao Z."/>
            <person name="Zhang J."/>
            <person name="Zhang X."/>
            <person name="Zhao G."/>
            <person name="Zhou J."/>
            <person name="Zhou Y."/>
            <person name="Nelson D."/>
            <person name="Lehrach H."/>
            <person name="Reinhardt R."/>
            <person name="Naylor S.L."/>
            <person name="Yang H."/>
            <person name="Olson M."/>
            <person name="Weinstock G."/>
            <person name="Gibbs R.A."/>
        </authorList>
    </citation>
    <scope>NUCLEOTIDE SEQUENCE [LARGE SCALE GENOMIC DNA]</scope>
</reference>
<reference key="2">
    <citation type="submission" date="2005-09" db="EMBL/GenBank/DDBJ databases">
        <authorList>
            <person name="Mural R.J."/>
            <person name="Istrail S."/>
            <person name="Sutton G.G."/>
            <person name="Florea L."/>
            <person name="Halpern A.L."/>
            <person name="Mobarry C.M."/>
            <person name="Lippert R."/>
            <person name="Walenz B."/>
            <person name="Shatkay H."/>
            <person name="Dew I."/>
            <person name="Miller J.R."/>
            <person name="Flanigan M.J."/>
            <person name="Edwards N.J."/>
            <person name="Bolanos R."/>
            <person name="Fasulo D."/>
            <person name="Halldorsson B.V."/>
            <person name="Hannenhalli S."/>
            <person name="Turner R."/>
            <person name="Yooseph S."/>
            <person name="Lu F."/>
            <person name="Nusskern D.R."/>
            <person name="Shue B.C."/>
            <person name="Zheng X.H."/>
            <person name="Zhong F."/>
            <person name="Delcher A.L."/>
            <person name="Huson D.H."/>
            <person name="Kravitz S.A."/>
            <person name="Mouchard L."/>
            <person name="Reinert K."/>
            <person name="Remington K.A."/>
            <person name="Clark A.G."/>
            <person name="Waterman M.S."/>
            <person name="Eichler E.E."/>
            <person name="Adams M.D."/>
            <person name="Hunkapiller M.W."/>
            <person name="Myers E.W."/>
            <person name="Venter J.C."/>
        </authorList>
    </citation>
    <scope>NUCLEOTIDE SEQUENCE [LARGE SCALE GENOMIC DNA]</scope>
</reference>
<reference key="3">
    <citation type="journal article" date="2004" name="Genome Res.">
        <title>The status, quality, and expansion of the NIH full-length cDNA project: the Mammalian Gene Collection (MGC).</title>
        <authorList>
            <consortium name="The MGC Project Team"/>
        </authorList>
    </citation>
    <scope>NUCLEOTIDE SEQUENCE [LARGE SCALE MRNA]</scope>
    <source>
        <tissue>Brain</tissue>
    </source>
</reference>
<dbReference type="EMBL" id="AC025573">
    <property type="status" value="NOT_ANNOTATED_CDS"/>
    <property type="molecule type" value="Genomic_DNA"/>
</dbReference>
<dbReference type="EMBL" id="CH471052">
    <property type="protein sequence ID" value="EAW78232.1"/>
    <property type="molecule type" value="Genomic_DNA"/>
</dbReference>
<dbReference type="EMBL" id="BC137178">
    <property type="protein sequence ID" value="AAI37179.1"/>
    <property type="molecule type" value="mRNA"/>
</dbReference>
<dbReference type="EMBL" id="BC137179">
    <property type="protein sequence ID" value="AAI37180.1"/>
    <property type="molecule type" value="mRNA"/>
</dbReference>
<dbReference type="EMBL" id="BC150565">
    <property type="protein sequence ID" value="AAI50566.1"/>
    <property type="molecule type" value="mRNA"/>
</dbReference>
<dbReference type="CCDS" id="CCDS33900.1"/>
<dbReference type="RefSeq" id="NP_001020437.1">
    <property type="nucleotide sequence ID" value="NM_001025266.3"/>
</dbReference>
<dbReference type="BioGRID" id="130098">
    <property type="interactions" value="2"/>
</dbReference>
<dbReference type="FunCoup" id="A6NLC5">
    <property type="interactions" value="28"/>
</dbReference>
<dbReference type="STRING" id="9606.ENSP00000334974"/>
<dbReference type="iPTMnet" id="A6NLC5"/>
<dbReference type="PhosphoSitePlus" id="A6NLC5"/>
<dbReference type="BioMuta" id="C3orf70"/>
<dbReference type="jPOST" id="A6NLC5"/>
<dbReference type="MassIVE" id="A6NLC5"/>
<dbReference type="PaxDb" id="9606-ENSP00000334974"/>
<dbReference type="PeptideAtlas" id="A6NLC5"/>
<dbReference type="ProteomicsDB" id="1464"/>
<dbReference type="Antibodypedia" id="52632">
    <property type="antibodies" value="35 antibodies from 10 providers"/>
</dbReference>
<dbReference type="DNASU" id="285382"/>
<dbReference type="Ensembl" id="ENST00000335012.3">
    <property type="protein sequence ID" value="ENSP00000334974.2"/>
    <property type="gene ID" value="ENSG00000187068.3"/>
</dbReference>
<dbReference type="GeneID" id="285382"/>
<dbReference type="KEGG" id="hsa:285382"/>
<dbReference type="MANE-Select" id="ENST00000335012.3">
    <property type="protein sequence ID" value="ENSP00000334974.2"/>
    <property type="RefSeq nucleotide sequence ID" value="NM_001025266.3"/>
    <property type="RefSeq protein sequence ID" value="NP_001020437.1"/>
</dbReference>
<dbReference type="UCSC" id="uc003fpd.3">
    <property type="organism name" value="human"/>
</dbReference>
<dbReference type="AGR" id="HGNC:33731"/>
<dbReference type="CTD" id="285382"/>
<dbReference type="DisGeNET" id="285382"/>
<dbReference type="GeneCards" id="C3orf70"/>
<dbReference type="HGNC" id="HGNC:33731">
    <property type="gene designation" value="C3orf70"/>
</dbReference>
<dbReference type="HPA" id="ENSG00000187068">
    <property type="expression patterns" value="Tissue enhanced (smooth)"/>
</dbReference>
<dbReference type="neXtProt" id="NX_A6NLC5"/>
<dbReference type="OpenTargets" id="ENSG00000187068"/>
<dbReference type="PharmGKB" id="PA162379707"/>
<dbReference type="VEuPathDB" id="HostDB:ENSG00000187068"/>
<dbReference type="eggNOG" id="ENOG502QQSJ">
    <property type="taxonomic scope" value="Eukaryota"/>
</dbReference>
<dbReference type="GeneTree" id="ENSGT00390000006618"/>
<dbReference type="HOGENOM" id="CLU_081879_0_0_1"/>
<dbReference type="InParanoid" id="A6NLC5"/>
<dbReference type="OMA" id="GAHKCPK"/>
<dbReference type="OrthoDB" id="8924346at2759"/>
<dbReference type="PAN-GO" id="A6NLC5">
    <property type="GO annotations" value="1 GO annotation based on evolutionary models"/>
</dbReference>
<dbReference type="PhylomeDB" id="A6NLC5"/>
<dbReference type="TreeFam" id="TF328625"/>
<dbReference type="PathwayCommons" id="A6NLC5"/>
<dbReference type="BioGRID-ORCS" id="285382">
    <property type="hits" value="16 hits in 1123 CRISPR screens"/>
</dbReference>
<dbReference type="ChiTaRS" id="C3orf70">
    <property type="organism name" value="human"/>
</dbReference>
<dbReference type="GenomeRNAi" id="285382"/>
<dbReference type="Pharos" id="A6NLC5">
    <property type="development level" value="Tdark"/>
</dbReference>
<dbReference type="PRO" id="PR:A6NLC5"/>
<dbReference type="Proteomes" id="UP000005640">
    <property type="component" value="Chromosome 3"/>
</dbReference>
<dbReference type="RNAct" id="A6NLC5">
    <property type="molecule type" value="protein"/>
</dbReference>
<dbReference type="Bgee" id="ENSG00000187068">
    <property type="expression patterns" value="Expressed in saphenous vein and 178 other cell types or tissues"/>
</dbReference>
<dbReference type="GO" id="GO:0048512">
    <property type="term" value="P:circadian behavior"/>
    <property type="evidence" value="ECO:0000250"/>
    <property type="project" value="UniProtKB"/>
</dbReference>
<dbReference type="GO" id="GO:0007399">
    <property type="term" value="P:nervous system development"/>
    <property type="evidence" value="ECO:0000250"/>
    <property type="project" value="UniProtKB"/>
</dbReference>
<dbReference type="InterPro" id="IPR029670">
    <property type="entry name" value="UPF0524_fam"/>
</dbReference>
<dbReference type="PANTHER" id="PTHR31785">
    <property type="entry name" value="UPF0524 PROTEIN C3ORF70"/>
    <property type="match status" value="1"/>
</dbReference>
<dbReference type="PANTHER" id="PTHR31785:SF2">
    <property type="entry name" value="UPF0524 PROTEIN C3ORF70"/>
    <property type="match status" value="1"/>
</dbReference>
<dbReference type="Pfam" id="PF15823">
    <property type="entry name" value="UPF0524"/>
    <property type="match status" value="1"/>
</dbReference>
<accession>A6NLC5</accession>
<accession>B2RNY2</accession>
<accession>B9EH83</accession>
<sequence>MSAAASPASERGWKSEKLDEAQALARSCAARRPDFQPCDGLSICATHSHGKCFKLHWCCHLGWCHCKYMYQPMTPVEQLPSTEIPARPREPTNTIQISVSLTEHFLKFASVFQPPLPPDSPRYCMISDLFIDNYQVKCINGKMCYVQKQPAPHSHRMSPEEVSAHDALISKESNTPKIDHCSSPSSSEDSGINAIGAHYVESCDEDTEEGAELSSEEDYSPESSWEPDECTLLSPSQSDLEVIETIETTV</sequence>
<protein>
    <recommendedName>
        <fullName>UPF0524 protein C3orf70</fullName>
    </recommendedName>
</protein>
<organism>
    <name type="scientific">Homo sapiens</name>
    <name type="common">Human</name>
    <dbReference type="NCBI Taxonomy" id="9606"/>
    <lineage>
        <taxon>Eukaryota</taxon>
        <taxon>Metazoa</taxon>
        <taxon>Chordata</taxon>
        <taxon>Craniata</taxon>
        <taxon>Vertebrata</taxon>
        <taxon>Euteleostomi</taxon>
        <taxon>Mammalia</taxon>
        <taxon>Eutheria</taxon>
        <taxon>Euarchontoglires</taxon>
        <taxon>Primates</taxon>
        <taxon>Haplorrhini</taxon>
        <taxon>Catarrhini</taxon>
        <taxon>Hominidae</taxon>
        <taxon>Homo</taxon>
    </lineage>
</organism>
<name>CC070_HUMAN</name>
<feature type="chain" id="PRO_0000319976" description="UPF0524 protein C3orf70">
    <location>
        <begin position="1"/>
        <end position="250"/>
    </location>
</feature>
<feature type="region of interest" description="Disordered" evidence="2">
    <location>
        <begin position="201"/>
        <end position="250"/>
    </location>
</feature>
<feature type="compositionally biased region" description="Acidic residues" evidence="2">
    <location>
        <begin position="202"/>
        <end position="229"/>
    </location>
</feature>
<keyword id="KW-0524">Neurogenesis</keyword>
<keyword id="KW-1267">Proteomics identification</keyword>
<keyword id="KW-1185">Reference proteome</keyword>
<evidence type="ECO:0000250" key="1">
    <source>
        <dbReference type="UniProtKB" id="Q1LY84"/>
    </source>
</evidence>
<evidence type="ECO:0000256" key="2">
    <source>
        <dbReference type="SAM" id="MobiDB-lite"/>
    </source>
</evidence>
<evidence type="ECO:0000305" key="3"/>
<proteinExistence type="evidence at protein level"/>
<gene>
    <name type="primary">C3orf70</name>
</gene>